<organism>
    <name type="scientific">Escherichia coli O9:H4 (strain HS)</name>
    <dbReference type="NCBI Taxonomy" id="331112"/>
    <lineage>
        <taxon>Bacteria</taxon>
        <taxon>Pseudomonadati</taxon>
        <taxon>Pseudomonadota</taxon>
        <taxon>Gammaproteobacteria</taxon>
        <taxon>Enterobacterales</taxon>
        <taxon>Enterobacteriaceae</taxon>
        <taxon>Escherichia</taxon>
    </lineage>
</organism>
<keyword id="KW-0067">ATP-binding</keyword>
<keyword id="KW-0997">Cell inner membrane</keyword>
<keyword id="KW-1003">Cell membrane</keyword>
<keyword id="KW-0472">Membrane</keyword>
<keyword id="KW-0547">Nucleotide-binding</keyword>
<keyword id="KW-1278">Translocase</keyword>
<keyword id="KW-0813">Transport</keyword>
<proteinExistence type="inferred from homology"/>
<comment type="function">
    <text evidence="1">Part of the ABC transporter complex BtuCDF involved in vitamin B12 import. Responsible for energy coupling to the transport system.</text>
</comment>
<comment type="catalytic activity">
    <reaction evidence="1">
        <text>an R-cob(III)alamin(out) + ATP + H2O = an R-cob(III)alamin(in) + ADP + phosphate + H(+)</text>
        <dbReference type="Rhea" id="RHEA:17873"/>
        <dbReference type="ChEBI" id="CHEBI:15377"/>
        <dbReference type="ChEBI" id="CHEBI:15378"/>
        <dbReference type="ChEBI" id="CHEBI:30616"/>
        <dbReference type="ChEBI" id="CHEBI:43474"/>
        <dbReference type="ChEBI" id="CHEBI:140785"/>
        <dbReference type="ChEBI" id="CHEBI:456216"/>
        <dbReference type="EC" id="7.6.2.8"/>
    </reaction>
</comment>
<comment type="subunit">
    <text evidence="1">The complex is composed of two ATP-binding proteins (BtuD), two transmembrane proteins (BtuC) and a solute-binding protein (BtuF).</text>
</comment>
<comment type="subcellular location">
    <subcellularLocation>
        <location evidence="1">Cell inner membrane</location>
        <topology evidence="1">Peripheral membrane protein</topology>
    </subcellularLocation>
</comment>
<comment type="similarity">
    <text evidence="1">Belongs to the ABC transporter superfamily. Vitamin B12 importer (TC 3.A.1.13.1) family.</text>
</comment>
<sequence>MSIVMQLQDVAESTRLGPLSGEVRAGEILHLVGPNGAGKSTLLARMAGMTSGKGSIQFAGQPLEAWSATKLALHRAYLSQQQTPPFAMPVWHYLTLHQHDKTRTELLNDVAGALALDDKLGRSTNQLSGGEWQRVRLAAVVLQITPQANPAGQLLLLDEPMNSLDVAQQSALDKILSALCQQGLAIVMSSHDLNHTLRHAHRAWLLKGGKMLASGRREEVLTPPNLAQAYGMNFRRLDIEGHRMLISTI</sequence>
<dbReference type="EC" id="7.6.2.8" evidence="1"/>
<dbReference type="EMBL" id="CP000802">
    <property type="protein sequence ID" value="ABV06105.1"/>
    <property type="molecule type" value="Genomic_DNA"/>
</dbReference>
<dbReference type="RefSeq" id="WP_000029466.1">
    <property type="nucleotide sequence ID" value="NC_009800.1"/>
</dbReference>
<dbReference type="SMR" id="A8A0Q1"/>
<dbReference type="GeneID" id="93775873"/>
<dbReference type="KEGG" id="ecx:EcHS_A1789"/>
<dbReference type="HOGENOM" id="CLU_000604_1_11_6"/>
<dbReference type="GO" id="GO:0005886">
    <property type="term" value="C:plasma membrane"/>
    <property type="evidence" value="ECO:0007669"/>
    <property type="project" value="UniProtKB-SubCell"/>
</dbReference>
<dbReference type="GO" id="GO:0015420">
    <property type="term" value="F:ABC-type vitamin B12 transporter activity"/>
    <property type="evidence" value="ECO:0007669"/>
    <property type="project" value="UniProtKB-UniRule"/>
</dbReference>
<dbReference type="GO" id="GO:0005524">
    <property type="term" value="F:ATP binding"/>
    <property type="evidence" value="ECO:0007669"/>
    <property type="project" value="UniProtKB-KW"/>
</dbReference>
<dbReference type="GO" id="GO:0016887">
    <property type="term" value="F:ATP hydrolysis activity"/>
    <property type="evidence" value="ECO:0007669"/>
    <property type="project" value="InterPro"/>
</dbReference>
<dbReference type="CDD" id="cd03214">
    <property type="entry name" value="ABC_Iron-Siderophores_B12_Hemin"/>
    <property type="match status" value="1"/>
</dbReference>
<dbReference type="FunFam" id="3.40.50.300:FF:000462">
    <property type="entry name" value="Vitamin B12 import ATP-binding protein BtuD"/>
    <property type="match status" value="1"/>
</dbReference>
<dbReference type="Gene3D" id="3.40.50.300">
    <property type="entry name" value="P-loop containing nucleotide triphosphate hydrolases"/>
    <property type="match status" value="1"/>
</dbReference>
<dbReference type="HAMAP" id="MF_01005">
    <property type="entry name" value="BtuD"/>
    <property type="match status" value="1"/>
</dbReference>
<dbReference type="InterPro" id="IPR003593">
    <property type="entry name" value="AAA+_ATPase"/>
</dbReference>
<dbReference type="InterPro" id="IPR003439">
    <property type="entry name" value="ABC_transporter-like_ATP-bd"/>
</dbReference>
<dbReference type="InterPro" id="IPR017871">
    <property type="entry name" value="ABC_transporter-like_CS"/>
</dbReference>
<dbReference type="InterPro" id="IPR023693">
    <property type="entry name" value="ABC_transptr_BtuD"/>
</dbReference>
<dbReference type="InterPro" id="IPR050153">
    <property type="entry name" value="Metal_Ion_Import_ABC"/>
</dbReference>
<dbReference type="InterPro" id="IPR027417">
    <property type="entry name" value="P-loop_NTPase"/>
</dbReference>
<dbReference type="NCBIfam" id="NF002981">
    <property type="entry name" value="PRK03695.1"/>
    <property type="match status" value="1"/>
</dbReference>
<dbReference type="PANTHER" id="PTHR42734">
    <property type="entry name" value="METAL TRANSPORT SYSTEM ATP-BINDING PROTEIN TM_0124-RELATED"/>
    <property type="match status" value="1"/>
</dbReference>
<dbReference type="PANTHER" id="PTHR42734:SF18">
    <property type="entry name" value="VITAMIN B12 IMPORT ATP-BINDING PROTEIN BTUD"/>
    <property type="match status" value="1"/>
</dbReference>
<dbReference type="Pfam" id="PF00005">
    <property type="entry name" value="ABC_tran"/>
    <property type="match status" value="1"/>
</dbReference>
<dbReference type="SMART" id="SM00382">
    <property type="entry name" value="AAA"/>
    <property type="match status" value="1"/>
</dbReference>
<dbReference type="SUPFAM" id="SSF52540">
    <property type="entry name" value="P-loop containing nucleoside triphosphate hydrolases"/>
    <property type="match status" value="1"/>
</dbReference>
<dbReference type="PROSITE" id="PS00211">
    <property type="entry name" value="ABC_TRANSPORTER_1"/>
    <property type="match status" value="1"/>
</dbReference>
<dbReference type="PROSITE" id="PS50893">
    <property type="entry name" value="ABC_TRANSPORTER_2"/>
    <property type="match status" value="1"/>
</dbReference>
<name>BTUD_ECOHS</name>
<accession>A8A0Q1</accession>
<protein>
    <recommendedName>
        <fullName evidence="1">Vitamin B12 import ATP-binding protein BtuD</fullName>
        <ecNumber evidence="1">7.6.2.8</ecNumber>
    </recommendedName>
    <alternativeName>
        <fullName evidence="1">Vitamin B12-transporting ATPase</fullName>
    </alternativeName>
</protein>
<gene>
    <name evidence="1" type="primary">btuD</name>
    <name type="ordered locus">EcHS_A1789</name>
</gene>
<evidence type="ECO:0000255" key="1">
    <source>
        <dbReference type="HAMAP-Rule" id="MF_01005"/>
    </source>
</evidence>
<feature type="chain" id="PRO_1000083960" description="Vitamin B12 import ATP-binding protein BtuD">
    <location>
        <begin position="1"/>
        <end position="249"/>
    </location>
</feature>
<feature type="domain" description="ABC transporter" evidence="1">
    <location>
        <begin position="1"/>
        <end position="233"/>
    </location>
</feature>
<feature type="binding site" evidence="1">
    <location>
        <begin position="33"/>
        <end position="40"/>
    </location>
    <ligand>
        <name>ATP</name>
        <dbReference type="ChEBI" id="CHEBI:30616"/>
    </ligand>
</feature>
<reference key="1">
    <citation type="journal article" date="2008" name="J. Bacteriol.">
        <title>The pangenome structure of Escherichia coli: comparative genomic analysis of E. coli commensal and pathogenic isolates.</title>
        <authorList>
            <person name="Rasko D.A."/>
            <person name="Rosovitz M.J."/>
            <person name="Myers G.S.A."/>
            <person name="Mongodin E.F."/>
            <person name="Fricke W.F."/>
            <person name="Gajer P."/>
            <person name="Crabtree J."/>
            <person name="Sebaihia M."/>
            <person name="Thomson N.R."/>
            <person name="Chaudhuri R."/>
            <person name="Henderson I.R."/>
            <person name="Sperandio V."/>
            <person name="Ravel J."/>
        </authorList>
    </citation>
    <scope>NUCLEOTIDE SEQUENCE [LARGE SCALE GENOMIC DNA]</scope>
    <source>
        <strain>HS</strain>
    </source>
</reference>